<protein>
    <recommendedName>
        <fullName>Spliceosome RNA helicase DDX39B</fullName>
        <ecNumber>3.6.4.13</ecNumber>
    </recommendedName>
    <alternativeName>
        <fullName>56 kDa U2AF65-associated protein</fullName>
    </alternativeName>
    <alternativeName>
        <fullName>DEAD box protein UAP56</fullName>
    </alternativeName>
</protein>
<keyword id="KW-0007">Acetylation</keyword>
<keyword id="KW-0067">ATP-binding</keyword>
<keyword id="KW-0963">Cytoplasm</keyword>
<keyword id="KW-0347">Helicase</keyword>
<keyword id="KW-0378">Hydrolase</keyword>
<keyword id="KW-1017">Isopeptide bond</keyword>
<keyword id="KW-0507">mRNA processing</keyword>
<keyword id="KW-0508">mRNA splicing</keyword>
<keyword id="KW-0509">mRNA transport</keyword>
<keyword id="KW-0547">Nucleotide-binding</keyword>
<keyword id="KW-0539">Nucleus</keyword>
<keyword id="KW-0597">Phosphoprotein</keyword>
<keyword id="KW-1185">Reference proteome</keyword>
<keyword id="KW-0694">RNA-binding</keyword>
<keyword id="KW-0747">Spliceosome</keyword>
<keyword id="KW-0813">Transport</keyword>
<keyword id="KW-0832">Ubl conjugation</keyword>
<proteinExistence type="evidence at transcript level"/>
<name>DX39B_BOVIN</name>
<sequence>MAENDVDNELLDYEDDEVETAAGGDGAEAPAKKDVKGSYVSIHSSGFRDFLLKPELLRAIVDCGFEHPSEVQHECIPQAILGMDVLCQAKSGMGKTAVFVLATLQQLEPVTGQVSVLVMCHTRELAFQISKEYERFSKYMPSVKVAVFFGGLSIKKDEEVLKKNCPHIVVGTPGRILALARNKSLNLKHIKHFILDECDKMLEQLDMRRDVQEIFRMTPHEKQVMMFSATLSKEIRPVCRKFMQDPMEIFVDDETKLTLHGLQQYYVKLKDNEKNRKLFDLLDVLEFNQVVIFVKSVQRCIALAQLLVEQNFPAIAIHRGMPQEERLSRYQQFKDFQRRILVATNLFGRGMDIERVNIAFNYDMPEDSDTYLHRVARAGRFGTKGLAITFVSDENDAKILNDVQDRFEVNISELPDEIDISSYIEQTR</sequence>
<feature type="initiator methionine" description="Removed" evidence="2">
    <location>
        <position position="1"/>
    </location>
</feature>
<feature type="chain" id="PRO_0000282325" description="Spliceosome RNA helicase DDX39B">
    <location>
        <begin position="2"/>
        <end position="428"/>
    </location>
</feature>
<feature type="domain" description="Helicase ATP-binding" evidence="3">
    <location>
        <begin position="76"/>
        <end position="249"/>
    </location>
</feature>
<feature type="domain" description="Helicase C-terminal" evidence="4">
    <location>
        <begin position="261"/>
        <end position="422"/>
    </location>
</feature>
<feature type="region of interest" description="Disordered" evidence="5">
    <location>
        <begin position="1"/>
        <end position="31"/>
    </location>
</feature>
<feature type="short sequence motif" description="Q motif">
    <location>
        <begin position="45"/>
        <end position="73"/>
    </location>
</feature>
<feature type="short sequence motif" description="DECD box">
    <location>
        <begin position="196"/>
        <end position="199"/>
    </location>
</feature>
<feature type="compositionally biased region" description="Acidic residues" evidence="5">
    <location>
        <begin position="1"/>
        <end position="19"/>
    </location>
</feature>
<feature type="binding site" evidence="3">
    <location>
        <begin position="89"/>
        <end position="96"/>
    </location>
    <ligand>
        <name>ATP</name>
        <dbReference type="ChEBI" id="CHEBI:30616"/>
    </ligand>
</feature>
<feature type="modified residue" description="N-acetylalanine" evidence="2">
    <location>
        <position position="2"/>
    </location>
</feature>
<feature type="modified residue" description="N6-acetyllysine; alternate" evidence="2">
    <location>
        <position position="36"/>
    </location>
</feature>
<feature type="modified residue" description="Phosphoserine" evidence="2">
    <location>
        <position position="38"/>
    </location>
</feature>
<feature type="modified residue" description="Phosphoserine" evidence="2">
    <location>
        <position position="41"/>
    </location>
</feature>
<feature type="modified residue" description="Phosphothreonine" evidence="2">
    <location>
        <position position="172"/>
    </location>
</feature>
<feature type="cross-link" description="Glycyl lysine isopeptide (Lys-Gly) (interchain with G-Cter in SUMO2); alternate" evidence="2">
    <location>
        <position position="36"/>
    </location>
</feature>
<evidence type="ECO:0000250" key="1"/>
<evidence type="ECO:0000250" key="2">
    <source>
        <dbReference type="UniProtKB" id="Q13838"/>
    </source>
</evidence>
<evidence type="ECO:0000255" key="3">
    <source>
        <dbReference type="PROSITE-ProRule" id="PRU00541"/>
    </source>
</evidence>
<evidence type="ECO:0000255" key="4">
    <source>
        <dbReference type="PROSITE-ProRule" id="PRU00542"/>
    </source>
</evidence>
<evidence type="ECO:0000256" key="5">
    <source>
        <dbReference type="SAM" id="MobiDB-lite"/>
    </source>
</evidence>
<evidence type="ECO:0000305" key="6"/>
<dbReference type="EC" id="3.6.4.13"/>
<dbReference type="EMBL" id="BC102131">
    <property type="protein sequence ID" value="AAI02132.1"/>
    <property type="molecule type" value="mRNA"/>
</dbReference>
<dbReference type="RefSeq" id="NP_001028801.1">
    <property type="nucleotide sequence ID" value="NM_001033629.2"/>
</dbReference>
<dbReference type="RefSeq" id="XP_010816658.1">
    <property type="nucleotide sequence ID" value="XM_010818356.1"/>
</dbReference>
<dbReference type="SMR" id="Q3T147"/>
<dbReference type="FunCoup" id="Q3T147">
    <property type="interactions" value="4766"/>
</dbReference>
<dbReference type="STRING" id="9913.ENSBTAP00000067484"/>
<dbReference type="PaxDb" id="9913-ENSBTAP00000029090"/>
<dbReference type="PeptideAtlas" id="Q3T147"/>
<dbReference type="GeneID" id="540191"/>
<dbReference type="KEGG" id="bta:540191"/>
<dbReference type="CTD" id="7919"/>
<dbReference type="VEuPathDB" id="HostDB:ENSBTAG00000014490"/>
<dbReference type="eggNOG" id="KOG0329">
    <property type="taxonomic scope" value="Eukaryota"/>
</dbReference>
<dbReference type="HOGENOM" id="CLU_003041_1_0_1"/>
<dbReference type="InParanoid" id="Q3T147"/>
<dbReference type="OMA" id="YAHVEPK"/>
<dbReference type="OrthoDB" id="196131at2759"/>
<dbReference type="TreeFam" id="TF300442"/>
<dbReference type="Reactome" id="R-BTA-159236">
    <property type="pathway name" value="Transport of Mature mRNA derived from an Intron-Containing Transcript"/>
</dbReference>
<dbReference type="Reactome" id="R-BTA-72163">
    <property type="pathway name" value="mRNA Splicing - Major Pathway"/>
</dbReference>
<dbReference type="Reactome" id="R-BTA-72187">
    <property type="pathway name" value="mRNA 3'-end processing"/>
</dbReference>
<dbReference type="Reactome" id="R-BTA-73856">
    <property type="pathway name" value="RNA Polymerase II Transcription Termination"/>
</dbReference>
<dbReference type="Reactome" id="R-BTA-9013418">
    <property type="pathway name" value="RHOBTB2 GTPase cycle"/>
</dbReference>
<dbReference type="Proteomes" id="UP000009136">
    <property type="component" value="Chromosome 23"/>
</dbReference>
<dbReference type="Bgee" id="ENSBTAG00000014490">
    <property type="expression patterns" value="Expressed in uterine horn and 102 other cell types or tissues"/>
</dbReference>
<dbReference type="GO" id="GO:0005737">
    <property type="term" value="C:cytoplasm"/>
    <property type="evidence" value="ECO:0007669"/>
    <property type="project" value="UniProtKB-SubCell"/>
</dbReference>
<dbReference type="GO" id="GO:0016607">
    <property type="term" value="C:nuclear speck"/>
    <property type="evidence" value="ECO:0007669"/>
    <property type="project" value="UniProtKB-SubCell"/>
</dbReference>
<dbReference type="GO" id="GO:0005681">
    <property type="term" value="C:spliceosomal complex"/>
    <property type="evidence" value="ECO:0007669"/>
    <property type="project" value="UniProtKB-KW"/>
</dbReference>
<dbReference type="GO" id="GO:0000346">
    <property type="term" value="C:transcription export complex"/>
    <property type="evidence" value="ECO:0007669"/>
    <property type="project" value="Ensembl"/>
</dbReference>
<dbReference type="GO" id="GO:0005687">
    <property type="term" value="C:U4 snRNP"/>
    <property type="evidence" value="ECO:0007669"/>
    <property type="project" value="Ensembl"/>
</dbReference>
<dbReference type="GO" id="GO:0005688">
    <property type="term" value="C:U6 snRNP"/>
    <property type="evidence" value="ECO:0007669"/>
    <property type="project" value="Ensembl"/>
</dbReference>
<dbReference type="GO" id="GO:0005524">
    <property type="term" value="F:ATP binding"/>
    <property type="evidence" value="ECO:0007669"/>
    <property type="project" value="UniProtKB-KW"/>
</dbReference>
<dbReference type="GO" id="GO:0016887">
    <property type="term" value="F:ATP hydrolysis activity"/>
    <property type="evidence" value="ECO:0007669"/>
    <property type="project" value="RHEA"/>
</dbReference>
<dbReference type="GO" id="GO:0043008">
    <property type="term" value="F:ATP-dependent protein binding"/>
    <property type="evidence" value="ECO:0007669"/>
    <property type="project" value="Ensembl"/>
</dbReference>
<dbReference type="GO" id="GO:0042802">
    <property type="term" value="F:identical protein binding"/>
    <property type="evidence" value="ECO:0007669"/>
    <property type="project" value="Ensembl"/>
</dbReference>
<dbReference type="GO" id="GO:0003729">
    <property type="term" value="F:mRNA binding"/>
    <property type="evidence" value="ECO:0000318"/>
    <property type="project" value="GO_Central"/>
</dbReference>
<dbReference type="GO" id="GO:0003724">
    <property type="term" value="F:RNA helicase activity"/>
    <property type="evidence" value="ECO:0000318"/>
    <property type="project" value="GO_Central"/>
</dbReference>
<dbReference type="GO" id="GO:0030621">
    <property type="term" value="F:U4 snRNA binding"/>
    <property type="evidence" value="ECO:0007669"/>
    <property type="project" value="Ensembl"/>
</dbReference>
<dbReference type="GO" id="GO:0017070">
    <property type="term" value="F:U6 snRNA binding"/>
    <property type="evidence" value="ECO:0007669"/>
    <property type="project" value="Ensembl"/>
</dbReference>
<dbReference type="GO" id="GO:0006406">
    <property type="term" value="P:mRNA export from nucleus"/>
    <property type="evidence" value="ECO:0000250"/>
    <property type="project" value="AgBase"/>
</dbReference>
<dbReference type="GO" id="GO:0000398">
    <property type="term" value="P:mRNA splicing, via spliceosome"/>
    <property type="evidence" value="ECO:0000250"/>
    <property type="project" value="AgBase"/>
</dbReference>
<dbReference type="GO" id="GO:0000245">
    <property type="term" value="P:spliceosomal complex assembly"/>
    <property type="evidence" value="ECO:0007669"/>
    <property type="project" value="Ensembl"/>
</dbReference>
<dbReference type="CDD" id="cd17950">
    <property type="entry name" value="DEADc_DDX39"/>
    <property type="match status" value="1"/>
</dbReference>
<dbReference type="CDD" id="cd18787">
    <property type="entry name" value="SF2_C_DEAD"/>
    <property type="match status" value="1"/>
</dbReference>
<dbReference type="FunFam" id="3.40.50.300:FF:000111">
    <property type="entry name" value="DEAD-box ATP-dependent RNA helicase"/>
    <property type="match status" value="1"/>
</dbReference>
<dbReference type="FunFam" id="3.40.50.300:FF:000168">
    <property type="entry name" value="DEAD-box ATP-dependent RNA helicase 56-like"/>
    <property type="match status" value="1"/>
</dbReference>
<dbReference type="Gene3D" id="3.40.50.300">
    <property type="entry name" value="P-loop containing nucleotide triphosphate hydrolases"/>
    <property type="match status" value="2"/>
</dbReference>
<dbReference type="InterPro" id="IPR011545">
    <property type="entry name" value="DEAD/DEAH_box_helicase_dom"/>
</dbReference>
<dbReference type="InterPro" id="IPR014001">
    <property type="entry name" value="Helicase_ATP-bd"/>
</dbReference>
<dbReference type="InterPro" id="IPR001650">
    <property type="entry name" value="Helicase_C-like"/>
</dbReference>
<dbReference type="InterPro" id="IPR027417">
    <property type="entry name" value="P-loop_NTPase"/>
</dbReference>
<dbReference type="InterPro" id="IPR014014">
    <property type="entry name" value="RNA_helicase_DEAD_Q_motif"/>
</dbReference>
<dbReference type="PANTHER" id="PTHR47958">
    <property type="entry name" value="ATP-DEPENDENT RNA HELICASE DBP3"/>
    <property type="match status" value="1"/>
</dbReference>
<dbReference type="Pfam" id="PF00270">
    <property type="entry name" value="DEAD"/>
    <property type="match status" value="1"/>
</dbReference>
<dbReference type="Pfam" id="PF00271">
    <property type="entry name" value="Helicase_C"/>
    <property type="match status" value="1"/>
</dbReference>
<dbReference type="SMART" id="SM00487">
    <property type="entry name" value="DEXDc"/>
    <property type="match status" value="1"/>
</dbReference>
<dbReference type="SMART" id="SM00490">
    <property type="entry name" value="HELICc"/>
    <property type="match status" value="1"/>
</dbReference>
<dbReference type="SUPFAM" id="SSF52540">
    <property type="entry name" value="P-loop containing nucleoside triphosphate hydrolases"/>
    <property type="match status" value="1"/>
</dbReference>
<dbReference type="PROSITE" id="PS51192">
    <property type="entry name" value="HELICASE_ATP_BIND_1"/>
    <property type="match status" value="1"/>
</dbReference>
<dbReference type="PROSITE" id="PS51194">
    <property type="entry name" value="HELICASE_CTER"/>
    <property type="match status" value="1"/>
</dbReference>
<dbReference type="PROSITE" id="PS51195">
    <property type="entry name" value="Q_MOTIF"/>
    <property type="match status" value="1"/>
</dbReference>
<comment type="function">
    <text evidence="2">Involved in nuclear export of spliced and unspliced mRNA. Component of the TREX complex which is thought to couple mRNA transcription, processing and nuclear export, and specifically associates with spliced mRNA and not with unspliced pre-mRNA. The TREX complex is recruited to spliced mRNAs by a transcription-independent mechanism, binds to mRNA upstream of the exon-junction complex (EJC) and is recruited in a splicing- and cap-dependent manner to a region near the 5' end of the mRNA where it functions in mRNA export to the cytoplasm via the TAP/NXF1 pathway. The THOC1-THOC2-THOC3 core complex alone is sufficient to promote ATPase activity of DDX39B; in the complex THOC2 is the only component that directly interacts with DDX39B. Associates with SARNP/CIP29, which facilitates RNA binding of DDX39B and likely plays a role in mRNA export. May undergo several rounds of ATP hydrolysis during assembly of TREX to drive subsequent loading of components such as ALYREF/THOC4 and CHTOP onto mRNA. Also associates with pre-mRNA independent of ALYREF/THOC4. Involved in the nuclear export of intronless mRNA; the ATP-bound form is proposed to recruit export adapter ALYREF/THOC4 to intronless mRNA; its ATPase activity is cooperatively stimulated by RNA and ALYREF/THOC4 and ATP hydrolysis is thought to trigger the dissociation from RNA to allow the association of ALYREF/THOC4 and the NXF1-NXT1 heterodimer. Involved in transcription elongation and genome stability.</text>
</comment>
<comment type="function">
    <text evidence="2">Splice factor that is required for the first ATP-dependent step in spliceosome assembly and for the interaction of U2 snRNP with the branchpoint. Has both RNA-stimulated ATP binding/hydrolysis activity and ATP-dependent RNA unwinding activity. Even with the stimulation of RNA, the ATPase activity is weak. Can only hydrolyze ATP but not other NTPs. The RNA stimulation of ATPase activity does not have a strong preference for the sequence and length of the RNA. However, ssRNA stimulates the ATPase activity much more strongly than dsRNA. Can unwind 5' or 3' overhangs or blunt end RNA duplexes in vitro. The ATPase and helicase activities are not influenced by U2AF2; the effect of ALYREF/THOC4 is reported conflictingly.</text>
</comment>
<comment type="catalytic activity">
    <reaction evidence="2">
        <text>ATP + H2O = ADP + phosphate + H(+)</text>
        <dbReference type="Rhea" id="RHEA:13065"/>
        <dbReference type="ChEBI" id="CHEBI:15377"/>
        <dbReference type="ChEBI" id="CHEBI:15378"/>
        <dbReference type="ChEBI" id="CHEBI:30616"/>
        <dbReference type="ChEBI" id="CHEBI:43474"/>
        <dbReference type="ChEBI" id="CHEBI:456216"/>
        <dbReference type="EC" id="3.6.4.13"/>
    </reaction>
</comment>
<comment type="subunit">
    <text evidence="2">Homodimer, and heterodimer with DDX39A. DDX39B interacts with the THO subcomplex to form the THO-DDX39B complex which multimerizes into a 28-subunit tetrameric assembly. Component of the transcription/export (TREX) complex at least composed of ALYREF/THOC4, DDX39B, SARNP/CIP29, CHTOP and the THO subcomplex; in the complex interacts with THOC2. THOC1-THOC2-THOC3-DDX39B subcomplex is sufficient for the interaction with export factor NXF1-NXT1. TREX seems to have a dynamic structure involving ATP-dependent remodeling. Within the TREX complex bridges ALYREF/THOC4 and the THO subcomplex, and, in a ATP-dependent manner, ALYREF/THOC4 and SARNP/CIP29. Component of the spliceosome. Interacts directly with U2AF2. Interacts with RBM8A, RNPS1 and SRRM1, FYTTD1/UIF, THOC1, MX1 and POLDIP3. Interacts with LUZP4. Interacts with SARNP/CIP29 (via the C-terminal domain); the interaction is direct and facilitates RNA binding of DDX39B.</text>
</comment>
<comment type="subcellular location">
    <subcellularLocation>
        <location evidence="1">Nucleus</location>
    </subcellularLocation>
    <subcellularLocation>
        <location evidence="1">Nucleus speckle</location>
    </subcellularLocation>
    <subcellularLocation>
        <location evidence="1">Cytoplasm</location>
    </subcellularLocation>
    <text evidence="1">Can translocate to the cytoplasm in the presence of MX1.</text>
</comment>
<comment type="domain">
    <text evidence="1">The helicase C-terminal domain mediates interaction with ALYREF/THOC4.</text>
</comment>
<comment type="similarity">
    <text evidence="6">Belongs to the DEAD box helicase family. DECD subfamily.</text>
</comment>
<reference key="1">
    <citation type="submission" date="2005-08" db="EMBL/GenBank/DDBJ databases">
        <authorList>
            <consortium name="NIH - Mammalian Gene Collection (MGC) project"/>
        </authorList>
    </citation>
    <scope>NUCLEOTIDE SEQUENCE [LARGE SCALE MRNA]</scope>
    <source>
        <strain>Crossbred X Angus</strain>
        <tissue>Ileum</tissue>
    </source>
</reference>
<gene>
    <name type="primary">DDX39B</name>
    <name type="synonym">BAT1</name>
    <name type="synonym">UAP56</name>
</gene>
<organism>
    <name type="scientific">Bos taurus</name>
    <name type="common">Bovine</name>
    <dbReference type="NCBI Taxonomy" id="9913"/>
    <lineage>
        <taxon>Eukaryota</taxon>
        <taxon>Metazoa</taxon>
        <taxon>Chordata</taxon>
        <taxon>Craniata</taxon>
        <taxon>Vertebrata</taxon>
        <taxon>Euteleostomi</taxon>
        <taxon>Mammalia</taxon>
        <taxon>Eutheria</taxon>
        <taxon>Laurasiatheria</taxon>
        <taxon>Artiodactyla</taxon>
        <taxon>Ruminantia</taxon>
        <taxon>Pecora</taxon>
        <taxon>Bovidae</taxon>
        <taxon>Bovinae</taxon>
        <taxon>Bos</taxon>
    </lineage>
</organism>
<accession>Q3T147</accession>